<proteinExistence type="evidence at transcript level"/>
<reference key="1">
    <citation type="journal article" date="2002" name="Nature">
        <title>The genome sequence and structure of rice chromosome 1.</title>
        <authorList>
            <person name="Sasaki T."/>
            <person name="Matsumoto T."/>
            <person name="Yamamoto K."/>
            <person name="Sakata K."/>
            <person name="Baba T."/>
            <person name="Katayose Y."/>
            <person name="Wu J."/>
            <person name="Niimura Y."/>
            <person name="Cheng Z."/>
            <person name="Nagamura Y."/>
            <person name="Antonio B.A."/>
            <person name="Kanamori H."/>
            <person name="Hosokawa S."/>
            <person name="Masukawa M."/>
            <person name="Arikawa K."/>
            <person name="Chiden Y."/>
            <person name="Hayashi M."/>
            <person name="Okamoto M."/>
            <person name="Ando T."/>
            <person name="Aoki H."/>
            <person name="Arita K."/>
            <person name="Hamada M."/>
            <person name="Harada C."/>
            <person name="Hijishita S."/>
            <person name="Honda M."/>
            <person name="Ichikawa Y."/>
            <person name="Idonuma A."/>
            <person name="Iijima M."/>
            <person name="Ikeda M."/>
            <person name="Ikeno M."/>
            <person name="Ito S."/>
            <person name="Ito T."/>
            <person name="Ito Y."/>
            <person name="Ito Y."/>
            <person name="Iwabuchi A."/>
            <person name="Kamiya K."/>
            <person name="Karasawa W."/>
            <person name="Katagiri S."/>
            <person name="Kikuta A."/>
            <person name="Kobayashi N."/>
            <person name="Kono I."/>
            <person name="Machita K."/>
            <person name="Maehara T."/>
            <person name="Mizuno H."/>
            <person name="Mizubayashi T."/>
            <person name="Mukai Y."/>
            <person name="Nagasaki H."/>
            <person name="Nakashima M."/>
            <person name="Nakama Y."/>
            <person name="Nakamichi Y."/>
            <person name="Nakamura M."/>
            <person name="Namiki N."/>
            <person name="Negishi M."/>
            <person name="Ohta I."/>
            <person name="Ono N."/>
            <person name="Saji S."/>
            <person name="Sakai K."/>
            <person name="Shibata M."/>
            <person name="Shimokawa T."/>
            <person name="Shomura A."/>
            <person name="Song J."/>
            <person name="Takazaki Y."/>
            <person name="Terasawa K."/>
            <person name="Tsuji K."/>
            <person name="Waki K."/>
            <person name="Yamagata H."/>
            <person name="Yamane H."/>
            <person name="Yoshiki S."/>
            <person name="Yoshihara R."/>
            <person name="Yukawa K."/>
            <person name="Zhong H."/>
            <person name="Iwama H."/>
            <person name="Endo T."/>
            <person name="Ito H."/>
            <person name="Hahn J.H."/>
            <person name="Kim H.-I."/>
            <person name="Eun M.-Y."/>
            <person name="Yano M."/>
            <person name="Jiang J."/>
            <person name="Gojobori T."/>
        </authorList>
    </citation>
    <scope>NUCLEOTIDE SEQUENCE [LARGE SCALE GENOMIC DNA] (OS01G0857700)</scope>
    <source>
        <strain>cv. Nipponbare</strain>
    </source>
</reference>
<reference key="2">
    <citation type="journal article" date="2002" name="Nature">
        <title>Sequence and analysis of rice chromosome 4.</title>
        <authorList>
            <person name="Feng Q."/>
            <person name="Zhang Y."/>
            <person name="Hao P."/>
            <person name="Wang S."/>
            <person name="Fu G."/>
            <person name="Huang Y."/>
            <person name="Li Y."/>
            <person name="Zhu J."/>
            <person name="Liu Y."/>
            <person name="Hu X."/>
            <person name="Jia P."/>
            <person name="Zhang Y."/>
            <person name="Zhao Q."/>
            <person name="Ying K."/>
            <person name="Yu S."/>
            <person name="Tang Y."/>
            <person name="Weng Q."/>
            <person name="Zhang L."/>
            <person name="Lu Y."/>
            <person name="Mu J."/>
            <person name="Lu Y."/>
            <person name="Zhang L.S."/>
            <person name="Yu Z."/>
            <person name="Fan D."/>
            <person name="Liu X."/>
            <person name="Lu T."/>
            <person name="Li C."/>
            <person name="Wu Y."/>
            <person name="Sun T."/>
            <person name="Lei H."/>
            <person name="Li T."/>
            <person name="Hu H."/>
            <person name="Guan J."/>
            <person name="Wu M."/>
            <person name="Zhang R."/>
            <person name="Zhou B."/>
            <person name="Chen Z."/>
            <person name="Chen L."/>
            <person name="Jin Z."/>
            <person name="Wang R."/>
            <person name="Yin H."/>
            <person name="Cai Z."/>
            <person name="Ren S."/>
            <person name="Lv G."/>
            <person name="Gu W."/>
            <person name="Zhu G."/>
            <person name="Tu Y."/>
            <person name="Jia J."/>
            <person name="Zhang Y."/>
            <person name="Chen J."/>
            <person name="Kang H."/>
            <person name="Chen X."/>
            <person name="Shao C."/>
            <person name="Sun Y."/>
            <person name="Hu Q."/>
            <person name="Zhang X."/>
            <person name="Zhang W."/>
            <person name="Wang L."/>
            <person name="Ding C."/>
            <person name="Sheng H."/>
            <person name="Gu J."/>
            <person name="Chen S."/>
            <person name="Ni L."/>
            <person name="Zhu F."/>
            <person name="Chen W."/>
            <person name="Lan L."/>
            <person name="Lai Y."/>
            <person name="Cheng Z."/>
            <person name="Gu M."/>
            <person name="Jiang J."/>
            <person name="Li J."/>
            <person name="Hong G."/>
            <person name="Xue Y."/>
            <person name="Han B."/>
        </authorList>
    </citation>
    <scope>NUCLEOTIDE SEQUENCE [LARGE SCALE GENOMIC DNA] (OS04G0646100)</scope>
    <source>
        <strain>cv. Nipponbare</strain>
    </source>
</reference>
<reference key="3">
    <citation type="journal article" date="2005" name="Nature">
        <title>The map-based sequence of the rice genome.</title>
        <authorList>
            <consortium name="International rice genome sequencing project (IRGSP)"/>
        </authorList>
    </citation>
    <scope>NUCLEOTIDE SEQUENCE [LARGE SCALE GENOMIC DNA] (OS01G0857700 AND OS04G0646100)</scope>
    <source>
        <strain>cv. Nipponbare</strain>
    </source>
</reference>
<reference key="4">
    <citation type="journal article" date="2008" name="Nucleic Acids Res.">
        <title>The rice annotation project database (RAP-DB): 2008 update.</title>
        <authorList>
            <consortium name="The rice annotation project (RAP)"/>
        </authorList>
    </citation>
    <scope>GENOME REANNOTATION</scope>
    <source>
        <strain>cv. Nipponbare</strain>
    </source>
</reference>
<reference key="5">
    <citation type="journal article" date="2013" name="Rice">
        <title>Improvement of the Oryza sativa Nipponbare reference genome using next generation sequence and optical map data.</title>
        <authorList>
            <person name="Kawahara Y."/>
            <person name="de la Bastide M."/>
            <person name="Hamilton J.P."/>
            <person name="Kanamori H."/>
            <person name="McCombie W.R."/>
            <person name="Ouyang S."/>
            <person name="Schwartz D.C."/>
            <person name="Tanaka T."/>
            <person name="Wu J."/>
            <person name="Zhou S."/>
            <person name="Childs K.L."/>
            <person name="Davidson R.M."/>
            <person name="Lin H."/>
            <person name="Quesada-Ocampo L."/>
            <person name="Vaillancourt B."/>
            <person name="Sakai H."/>
            <person name="Lee S.S."/>
            <person name="Kim J."/>
            <person name="Numa H."/>
            <person name="Itoh T."/>
            <person name="Buell C.R."/>
            <person name="Matsumoto T."/>
        </authorList>
    </citation>
    <scope>GENOME REANNOTATION</scope>
    <source>
        <strain>cv. Nipponbare</strain>
    </source>
</reference>
<reference key="6">
    <citation type="journal article" date="2005" name="PLoS Biol.">
        <title>The genomes of Oryza sativa: a history of duplications.</title>
        <authorList>
            <person name="Yu J."/>
            <person name="Wang J."/>
            <person name="Lin W."/>
            <person name="Li S."/>
            <person name="Li H."/>
            <person name="Zhou J."/>
            <person name="Ni P."/>
            <person name="Dong W."/>
            <person name="Hu S."/>
            <person name="Zeng C."/>
            <person name="Zhang J."/>
            <person name="Zhang Y."/>
            <person name="Li R."/>
            <person name="Xu Z."/>
            <person name="Li S."/>
            <person name="Li X."/>
            <person name="Zheng H."/>
            <person name="Cong L."/>
            <person name="Lin L."/>
            <person name="Yin J."/>
            <person name="Geng J."/>
            <person name="Li G."/>
            <person name="Shi J."/>
            <person name="Liu J."/>
            <person name="Lv H."/>
            <person name="Li J."/>
            <person name="Wang J."/>
            <person name="Deng Y."/>
            <person name="Ran L."/>
            <person name="Shi X."/>
            <person name="Wang X."/>
            <person name="Wu Q."/>
            <person name="Li C."/>
            <person name="Ren X."/>
            <person name="Wang J."/>
            <person name="Wang X."/>
            <person name="Li D."/>
            <person name="Liu D."/>
            <person name="Zhang X."/>
            <person name="Ji Z."/>
            <person name="Zhao W."/>
            <person name="Sun Y."/>
            <person name="Zhang Z."/>
            <person name="Bao J."/>
            <person name="Han Y."/>
            <person name="Dong L."/>
            <person name="Ji J."/>
            <person name="Chen P."/>
            <person name="Wu S."/>
            <person name="Liu J."/>
            <person name="Xiao Y."/>
            <person name="Bu D."/>
            <person name="Tan J."/>
            <person name="Yang L."/>
            <person name="Ye C."/>
            <person name="Zhang J."/>
            <person name="Xu J."/>
            <person name="Zhou Y."/>
            <person name="Yu Y."/>
            <person name="Zhang B."/>
            <person name="Zhuang S."/>
            <person name="Wei H."/>
            <person name="Liu B."/>
            <person name="Lei M."/>
            <person name="Yu H."/>
            <person name="Li Y."/>
            <person name="Xu H."/>
            <person name="Wei S."/>
            <person name="He X."/>
            <person name="Fang L."/>
            <person name="Zhang Z."/>
            <person name="Zhang Y."/>
            <person name="Huang X."/>
            <person name="Su Z."/>
            <person name="Tong W."/>
            <person name="Li J."/>
            <person name="Tong Z."/>
            <person name="Li S."/>
            <person name="Ye J."/>
            <person name="Wang L."/>
            <person name="Fang L."/>
            <person name="Lei T."/>
            <person name="Chen C.-S."/>
            <person name="Chen H.-C."/>
            <person name="Xu Z."/>
            <person name="Li H."/>
            <person name="Huang H."/>
            <person name="Zhang F."/>
            <person name="Xu H."/>
            <person name="Li N."/>
            <person name="Zhao C."/>
            <person name="Li S."/>
            <person name="Dong L."/>
            <person name="Huang Y."/>
            <person name="Li L."/>
            <person name="Xi Y."/>
            <person name="Qi Q."/>
            <person name="Li W."/>
            <person name="Zhang B."/>
            <person name="Hu W."/>
            <person name="Zhang Y."/>
            <person name="Tian X."/>
            <person name="Jiao Y."/>
            <person name="Liang X."/>
            <person name="Jin J."/>
            <person name="Gao L."/>
            <person name="Zheng W."/>
            <person name="Hao B."/>
            <person name="Liu S.-M."/>
            <person name="Wang W."/>
            <person name="Yuan L."/>
            <person name="Cao M."/>
            <person name="McDermott J."/>
            <person name="Samudrala R."/>
            <person name="Wang J."/>
            <person name="Wong G.K.-S."/>
            <person name="Yang H."/>
        </authorList>
    </citation>
    <scope>NUCLEOTIDE SEQUENCE [LARGE SCALE GENOMIC DNA] (OS01G0857700 AND OS04G0646100)</scope>
    <source>
        <strain>cv. Nipponbare</strain>
    </source>
</reference>
<reference key="7">
    <citation type="journal article" date="2003" name="Science">
        <title>Collection, mapping, and annotation of over 28,000 cDNA clones from japonica rice.</title>
        <authorList>
            <consortium name="The rice full-length cDNA consortium"/>
        </authorList>
    </citation>
    <scope>NUCLEOTIDE SEQUENCE [LARGE SCALE MRNA] (OS01G0857700)</scope>
    <source>
        <strain>cv. Nipponbare</strain>
    </source>
</reference>
<dbReference type="EMBL" id="AP003289">
    <property type="protein sequence ID" value="BAB63707.1"/>
    <property type="molecule type" value="Genomic_DNA"/>
</dbReference>
<dbReference type="EMBL" id="AL606445">
    <property type="protein sequence ID" value="CAE03175.2"/>
    <property type="molecule type" value="Genomic_DNA"/>
</dbReference>
<dbReference type="EMBL" id="AP008207">
    <property type="protein sequence ID" value="BAF06770.1"/>
    <property type="molecule type" value="Genomic_DNA"/>
</dbReference>
<dbReference type="EMBL" id="AP008210">
    <property type="protein sequence ID" value="BAF15983.1"/>
    <property type="molecule type" value="Genomic_DNA"/>
</dbReference>
<dbReference type="EMBL" id="AP014957">
    <property type="protein sequence ID" value="BAS75312.1"/>
    <property type="molecule type" value="Genomic_DNA"/>
</dbReference>
<dbReference type="EMBL" id="AP014960">
    <property type="status" value="NOT_ANNOTATED_CDS"/>
    <property type="molecule type" value="Genomic_DNA"/>
</dbReference>
<dbReference type="EMBL" id="CM000138">
    <property type="protein sequence ID" value="EAZ14207.1"/>
    <property type="molecule type" value="Genomic_DNA"/>
</dbReference>
<dbReference type="EMBL" id="CM000141">
    <property type="protein sequence ID" value="EAZ32197.1"/>
    <property type="molecule type" value="Genomic_DNA"/>
</dbReference>
<dbReference type="EMBL" id="AK066959">
    <property type="protein sequence ID" value="BAG90200.1"/>
    <property type="molecule type" value="mRNA"/>
</dbReference>
<dbReference type="EMBL" id="AK099794">
    <property type="protein sequence ID" value="BAG94298.1"/>
    <property type="molecule type" value="mRNA"/>
</dbReference>
<dbReference type="EMBL" id="AK243054">
    <property type="protein sequence ID" value="BAH01429.1"/>
    <property type="molecule type" value="mRNA"/>
</dbReference>
<dbReference type="RefSeq" id="XP_015611690.1">
    <property type="nucleotide sequence ID" value="XM_015756204.1"/>
</dbReference>
<dbReference type="SMR" id="Q94DE2"/>
<dbReference type="FunCoup" id="Q94DE2">
    <property type="interactions" value="2748"/>
</dbReference>
<dbReference type="STRING" id="39947.Q94DE2"/>
<dbReference type="PaxDb" id="39947-Q94DE2"/>
<dbReference type="EnsemblPlants" id="Os01t0857700-01">
    <property type="protein sequence ID" value="Os01t0857700-01"/>
    <property type="gene ID" value="Os01g0857700"/>
</dbReference>
<dbReference type="Gramene" id="Os01t0857700-01">
    <property type="protein sequence ID" value="Os01t0857700-01"/>
    <property type="gene ID" value="Os01g0857700"/>
</dbReference>
<dbReference type="KEGG" id="dosa:Os01g0857700"/>
<dbReference type="KEGG" id="dosa:Os04g0646100"/>
<dbReference type="KEGG" id="osa:4337198"/>
<dbReference type="eggNOG" id="KOG3404">
    <property type="taxonomic scope" value="Eukaryota"/>
</dbReference>
<dbReference type="HOGENOM" id="CLU_087132_1_1_1"/>
<dbReference type="InParanoid" id="Q94DE2"/>
<dbReference type="OMA" id="FLSHRIM"/>
<dbReference type="OrthoDB" id="277109at2759"/>
<dbReference type="Proteomes" id="UP000000763">
    <property type="component" value="Chromosome 1"/>
</dbReference>
<dbReference type="Proteomes" id="UP000000763">
    <property type="component" value="Chromosome 4"/>
</dbReference>
<dbReference type="Proteomes" id="UP000007752">
    <property type="component" value="Chromosome 1"/>
</dbReference>
<dbReference type="Proteomes" id="UP000007752">
    <property type="component" value="Chromosome 4"/>
</dbReference>
<dbReference type="Proteomes" id="UP000059680">
    <property type="component" value="Chromosome 1"/>
</dbReference>
<dbReference type="Proteomes" id="UP000059680">
    <property type="component" value="Chromosome 4"/>
</dbReference>
<dbReference type="GO" id="GO:0005681">
    <property type="term" value="C:spliceosomal complex"/>
    <property type="evidence" value="ECO:0000318"/>
    <property type="project" value="GO_Central"/>
</dbReference>
<dbReference type="GO" id="GO:0000398">
    <property type="term" value="P:mRNA splicing, via spliceosome"/>
    <property type="evidence" value="ECO:0000318"/>
    <property type="project" value="GO_Central"/>
</dbReference>
<dbReference type="InterPro" id="IPR001748">
    <property type="entry name" value="BUD31"/>
</dbReference>
<dbReference type="InterPro" id="IPR018230">
    <property type="entry name" value="BUD31/G10-rel_CS"/>
</dbReference>
<dbReference type="PANTHER" id="PTHR19411:SF7">
    <property type="entry name" value="PROTEIN BUD31 HOMOLOG 1"/>
    <property type="match status" value="1"/>
</dbReference>
<dbReference type="PANTHER" id="PTHR19411">
    <property type="entry name" value="PROTEIN BUD31-RELATED"/>
    <property type="match status" value="1"/>
</dbReference>
<dbReference type="Pfam" id="PF01125">
    <property type="entry name" value="BUD31"/>
    <property type="match status" value="1"/>
</dbReference>
<dbReference type="PRINTS" id="PR00322">
    <property type="entry name" value="G10"/>
</dbReference>
<dbReference type="PROSITE" id="PS00997">
    <property type="entry name" value="G10_1"/>
    <property type="match status" value="1"/>
</dbReference>
<dbReference type="PROSITE" id="PS00998">
    <property type="entry name" value="G10_2"/>
    <property type="match status" value="1"/>
</dbReference>
<protein>
    <recommendedName>
        <fullName evidence="1">Protein BUD31 homolog 1</fullName>
    </recommendedName>
    <alternativeName>
        <fullName evidence="1">Protein G10 homolog 1</fullName>
    </alternativeName>
</protein>
<feature type="chain" id="PRO_0000226828" description="Protein BUD31 homolog 1">
    <location>
        <begin position="1"/>
        <end position="145"/>
    </location>
</feature>
<evidence type="ECO:0000305" key="1"/>
<evidence type="ECO:0000312" key="2">
    <source>
        <dbReference type="EMBL" id="BAB63707.1"/>
    </source>
</evidence>
<evidence type="ECO:0000312" key="3">
    <source>
        <dbReference type="EMBL" id="BAF15983.1"/>
    </source>
</evidence>
<evidence type="ECO:0000312" key="4">
    <source>
        <dbReference type="EMBL" id="BAS75312.1"/>
    </source>
</evidence>
<evidence type="ECO:0000312" key="5">
    <source>
        <dbReference type="EMBL" id="CAE03175.2"/>
    </source>
</evidence>
<evidence type="ECO:0000312" key="6">
    <source>
        <dbReference type="EMBL" id="EAZ14207.1"/>
    </source>
</evidence>
<evidence type="ECO:0000312" key="7">
    <source>
        <dbReference type="EMBL" id="EAZ32197.1"/>
    </source>
</evidence>
<comment type="subcellular location">
    <subcellularLocation>
        <location evidence="1">Nucleus</location>
    </subcellularLocation>
</comment>
<comment type="similarity">
    <text evidence="1">Belongs to the BUD31 (G10) family.</text>
</comment>
<organism>
    <name type="scientific">Oryza sativa subsp. japonica</name>
    <name type="common">Rice</name>
    <dbReference type="NCBI Taxonomy" id="39947"/>
    <lineage>
        <taxon>Eukaryota</taxon>
        <taxon>Viridiplantae</taxon>
        <taxon>Streptophyta</taxon>
        <taxon>Embryophyta</taxon>
        <taxon>Tracheophyta</taxon>
        <taxon>Spermatophyta</taxon>
        <taxon>Magnoliopsida</taxon>
        <taxon>Liliopsida</taxon>
        <taxon>Poales</taxon>
        <taxon>Poaceae</taxon>
        <taxon>BOP clade</taxon>
        <taxon>Oryzoideae</taxon>
        <taxon>Oryzeae</taxon>
        <taxon>Oryzinae</taxon>
        <taxon>Oryza</taxon>
        <taxon>Oryza sativa</taxon>
    </lineage>
</organism>
<sequence>MPKIKTSRVKYPGGWELIEPTIRELDAKMREAENDTHDGKRKCEALWPIFRISHQRSRYIYDLYYRRKEISKELYEFCLDQGYADRNLIAKWKKPGYERLCCLRCIQTRDHNFATTCVCRVPKHLREEKVIECVHCGCRGCASGD</sequence>
<accession>Q94DE2</accession>
<accession>B7ECV3</accession>
<accession>Q0J9K4</accession>
<accession>Q7XQE3</accession>
<gene>
    <name evidence="4" type="ordered locus">Os01g0857700</name>
    <name evidence="1" type="ordered locus">LOC_Os01g63890</name>
    <name evidence="6" type="ORF">OsJ_004032</name>
    <name evidence="2" type="ORF">P0683F02.14</name>
</gene>
<gene>
    <name evidence="3" type="ordered locus">Os04g0646100</name>
    <name evidence="1" type="ordered locus">LOC_Os04g55290</name>
    <name evidence="7" type="ORF">OsJ_015680</name>
    <name evidence="5" type="ORF">OSJNBa0070O11.6</name>
</gene>
<name>BD31A_ORYSJ</name>
<keyword id="KW-0539">Nucleus</keyword>
<keyword id="KW-1185">Reference proteome</keyword>